<keyword id="KW-0040">ANK repeat</keyword>
<keyword id="KW-0067">ATP-binding</keyword>
<keyword id="KW-0418">Kinase</keyword>
<keyword id="KW-0547">Nucleotide-binding</keyword>
<keyword id="KW-1185">Reference proteome</keyword>
<keyword id="KW-0677">Repeat</keyword>
<keyword id="KW-0723">Serine/threonine-protein kinase</keyword>
<keyword id="KW-0808">Transferase</keyword>
<organism>
    <name type="scientific">Dictyostelium discoideum</name>
    <name type="common">Social amoeba</name>
    <dbReference type="NCBI Taxonomy" id="44689"/>
    <lineage>
        <taxon>Eukaryota</taxon>
        <taxon>Amoebozoa</taxon>
        <taxon>Evosea</taxon>
        <taxon>Eumycetozoa</taxon>
        <taxon>Dictyostelia</taxon>
        <taxon>Dictyosteliales</taxon>
        <taxon>Dictyosteliaceae</taxon>
        <taxon>Dictyostelium</taxon>
    </lineage>
</organism>
<proteinExistence type="inferred from homology"/>
<gene>
    <name type="ORF">DDB_G0278535</name>
</gene>
<comment type="catalytic activity">
    <reaction>
        <text>L-seryl-[protein] + ATP = O-phospho-L-seryl-[protein] + ADP + H(+)</text>
        <dbReference type="Rhea" id="RHEA:17989"/>
        <dbReference type="Rhea" id="RHEA-COMP:9863"/>
        <dbReference type="Rhea" id="RHEA-COMP:11604"/>
        <dbReference type="ChEBI" id="CHEBI:15378"/>
        <dbReference type="ChEBI" id="CHEBI:29999"/>
        <dbReference type="ChEBI" id="CHEBI:30616"/>
        <dbReference type="ChEBI" id="CHEBI:83421"/>
        <dbReference type="ChEBI" id="CHEBI:456216"/>
        <dbReference type="EC" id="2.7.11.1"/>
    </reaction>
</comment>
<comment type="catalytic activity">
    <reaction>
        <text>L-threonyl-[protein] + ATP = O-phospho-L-threonyl-[protein] + ADP + H(+)</text>
        <dbReference type="Rhea" id="RHEA:46608"/>
        <dbReference type="Rhea" id="RHEA-COMP:11060"/>
        <dbReference type="Rhea" id="RHEA-COMP:11605"/>
        <dbReference type="ChEBI" id="CHEBI:15378"/>
        <dbReference type="ChEBI" id="CHEBI:30013"/>
        <dbReference type="ChEBI" id="CHEBI:30616"/>
        <dbReference type="ChEBI" id="CHEBI:61977"/>
        <dbReference type="ChEBI" id="CHEBI:456216"/>
        <dbReference type="EC" id="2.7.11.1"/>
    </reaction>
</comment>
<comment type="similarity">
    <text evidence="5">Belongs to the protein kinase superfamily. TKL Ser/Thr protein kinase family.</text>
</comment>
<evidence type="ECO:0000255" key="1">
    <source>
        <dbReference type="PROSITE-ProRule" id="PRU00159"/>
    </source>
</evidence>
<evidence type="ECO:0000255" key="2">
    <source>
        <dbReference type="PROSITE-ProRule" id="PRU00184"/>
    </source>
</evidence>
<evidence type="ECO:0000255" key="3">
    <source>
        <dbReference type="PROSITE-ProRule" id="PRU10027"/>
    </source>
</evidence>
<evidence type="ECO:0000256" key="4">
    <source>
        <dbReference type="SAM" id="MobiDB-lite"/>
    </source>
</evidence>
<evidence type="ECO:0000305" key="5"/>
<feature type="chain" id="PRO_0000355160" description="Probable serine/threonine-protein kinase DDB_G0278535">
    <location>
        <begin position="1"/>
        <end position="848"/>
    </location>
</feature>
<feature type="repeat" description="ANK 1">
    <location>
        <begin position="181"/>
        <end position="212"/>
    </location>
</feature>
<feature type="repeat" description="ANK 2">
    <location>
        <begin position="218"/>
        <end position="248"/>
    </location>
</feature>
<feature type="repeat" description="ANK 3">
    <location>
        <begin position="252"/>
        <end position="285"/>
    </location>
</feature>
<feature type="repeat" description="ANK 4">
    <location>
        <begin position="289"/>
        <end position="320"/>
    </location>
</feature>
<feature type="repeat" description="ANK 5">
    <location>
        <begin position="324"/>
        <end position="353"/>
    </location>
</feature>
<feature type="domain" description="SAM" evidence="2">
    <location>
        <begin position="378"/>
        <end position="441"/>
    </location>
</feature>
<feature type="domain" description="Protein kinase" evidence="1">
    <location>
        <begin position="529"/>
        <end position="799"/>
    </location>
</feature>
<feature type="region of interest" description="Disordered" evidence="4">
    <location>
        <begin position="1"/>
        <end position="117"/>
    </location>
</feature>
<feature type="region of interest" description="Disordered" evidence="4">
    <location>
        <begin position="448"/>
        <end position="478"/>
    </location>
</feature>
<feature type="region of interest" description="Disordered" evidence="4">
    <location>
        <begin position="810"/>
        <end position="848"/>
    </location>
</feature>
<feature type="compositionally biased region" description="Low complexity" evidence="4">
    <location>
        <begin position="1"/>
        <end position="52"/>
    </location>
</feature>
<feature type="compositionally biased region" description="Low complexity" evidence="4">
    <location>
        <begin position="60"/>
        <end position="85"/>
    </location>
</feature>
<feature type="compositionally biased region" description="Low complexity" evidence="4">
    <location>
        <begin position="95"/>
        <end position="116"/>
    </location>
</feature>
<feature type="compositionally biased region" description="Low complexity" evidence="4">
    <location>
        <begin position="452"/>
        <end position="472"/>
    </location>
</feature>
<feature type="compositionally biased region" description="Low complexity" evidence="4">
    <location>
        <begin position="822"/>
        <end position="848"/>
    </location>
</feature>
<feature type="active site" description="Proton acceptor" evidence="1 3">
    <location>
        <position position="650"/>
    </location>
</feature>
<feature type="binding site" evidence="1">
    <location>
        <begin position="535"/>
        <end position="543"/>
    </location>
    <ligand>
        <name>ATP</name>
        <dbReference type="ChEBI" id="CHEBI:30616"/>
    </ligand>
</feature>
<feature type="binding site" evidence="1">
    <location>
        <position position="556"/>
    </location>
    <ligand>
        <name>ATP</name>
        <dbReference type="ChEBI" id="CHEBI:30616"/>
    </ligand>
</feature>
<protein>
    <recommendedName>
        <fullName>Probable serine/threonine-protein kinase DDB_G0278535</fullName>
        <ecNumber>2.7.11.1</ecNumber>
    </recommendedName>
</protein>
<name>Y9849_DICDI</name>
<accession>Q54XX5</accession>
<reference key="1">
    <citation type="journal article" date="2005" name="Nature">
        <title>The genome of the social amoeba Dictyostelium discoideum.</title>
        <authorList>
            <person name="Eichinger L."/>
            <person name="Pachebat J.A."/>
            <person name="Gloeckner G."/>
            <person name="Rajandream M.A."/>
            <person name="Sucgang R."/>
            <person name="Berriman M."/>
            <person name="Song J."/>
            <person name="Olsen R."/>
            <person name="Szafranski K."/>
            <person name="Xu Q."/>
            <person name="Tunggal B."/>
            <person name="Kummerfeld S."/>
            <person name="Madera M."/>
            <person name="Konfortov B.A."/>
            <person name="Rivero F."/>
            <person name="Bankier A.T."/>
            <person name="Lehmann R."/>
            <person name="Hamlin N."/>
            <person name="Davies R."/>
            <person name="Gaudet P."/>
            <person name="Fey P."/>
            <person name="Pilcher K."/>
            <person name="Chen G."/>
            <person name="Saunders D."/>
            <person name="Sodergren E.J."/>
            <person name="Davis P."/>
            <person name="Kerhornou A."/>
            <person name="Nie X."/>
            <person name="Hall N."/>
            <person name="Anjard C."/>
            <person name="Hemphill L."/>
            <person name="Bason N."/>
            <person name="Farbrother P."/>
            <person name="Desany B."/>
            <person name="Just E."/>
            <person name="Morio T."/>
            <person name="Rost R."/>
            <person name="Churcher C.M."/>
            <person name="Cooper J."/>
            <person name="Haydock S."/>
            <person name="van Driessche N."/>
            <person name="Cronin A."/>
            <person name="Goodhead I."/>
            <person name="Muzny D.M."/>
            <person name="Mourier T."/>
            <person name="Pain A."/>
            <person name="Lu M."/>
            <person name="Harper D."/>
            <person name="Lindsay R."/>
            <person name="Hauser H."/>
            <person name="James K.D."/>
            <person name="Quiles M."/>
            <person name="Madan Babu M."/>
            <person name="Saito T."/>
            <person name="Buchrieser C."/>
            <person name="Wardroper A."/>
            <person name="Felder M."/>
            <person name="Thangavelu M."/>
            <person name="Johnson D."/>
            <person name="Knights A."/>
            <person name="Loulseged H."/>
            <person name="Mungall K.L."/>
            <person name="Oliver K."/>
            <person name="Price C."/>
            <person name="Quail M.A."/>
            <person name="Urushihara H."/>
            <person name="Hernandez J."/>
            <person name="Rabbinowitsch E."/>
            <person name="Steffen D."/>
            <person name="Sanders M."/>
            <person name="Ma J."/>
            <person name="Kohara Y."/>
            <person name="Sharp S."/>
            <person name="Simmonds M.N."/>
            <person name="Spiegler S."/>
            <person name="Tivey A."/>
            <person name="Sugano S."/>
            <person name="White B."/>
            <person name="Walker D."/>
            <person name="Woodward J.R."/>
            <person name="Winckler T."/>
            <person name="Tanaka Y."/>
            <person name="Shaulsky G."/>
            <person name="Schleicher M."/>
            <person name="Weinstock G.M."/>
            <person name="Rosenthal A."/>
            <person name="Cox E.C."/>
            <person name="Chisholm R.L."/>
            <person name="Gibbs R.A."/>
            <person name="Loomis W.F."/>
            <person name="Platzer M."/>
            <person name="Kay R.R."/>
            <person name="Williams J.G."/>
            <person name="Dear P.H."/>
            <person name="Noegel A.A."/>
            <person name="Barrell B.G."/>
            <person name="Kuspa A."/>
        </authorList>
    </citation>
    <scope>NUCLEOTIDE SEQUENCE [LARGE SCALE GENOMIC DNA]</scope>
    <source>
        <strain>AX4</strain>
    </source>
</reference>
<sequence length="848" mass="94576">MNKSSSASTVPPHSTPHTAHSTSSSSLPPLSSTHHTNTSSTSNNNNNSNNNHNHNHHHTTAATTTTSTTGTGTTAATTSTSTSSTIPINTAGIHTSNSNLATATNTPSSSPQVSTSVERRFWMNDRGSRRSSTSLTQQPLTMNRSSNKLHAAVSARDLTRLKQRLSQPRKAKIELAEYDSMDQTPLCAALRNGSHDIVREILFFYQSNKMDINDQDKSGYTPLHVAASHCDDQILMLLLNYEGINVNITNEDKNSALHYFCQKFRSPNCQEPFSIFLKKGVNVNAQNKNGETPLHKSIFNNTVRLLMVNMLLDAGAEVNVLNSRGESPLHFAVRLGREDLVSVLVKAGADITIKGNEKKTCYELSLTIGNQRVINFLKNVQDIFNWLKSIDLEQYWLNFVKEEIFMDLLLDIDERTLDSLGITYSGHRLKIIRNCRILRDQQLLSTANSNVTTGSGSSGSTTTTTTTTTTTSGCGGLNVPENKKVTQLSIESLKSNPPNSMDSTGSISSDDLKESLTNLEHWVIDHSELEYTLKLGSGSSGKVYKGLYKGKEVAVKVLKSITTQSQLEEFKKEFQIMGSIRSQFMVTFYGACIEPKLCMVMEYCSRDSLYHVMNTKKYDIGWDRFFQFTMQMTLGVQCLHNWTPQIVHRDFKSLNLLVNEDWECKVSDFGLSRFNTADNLETLSKIRGTFAYCSPEVAVGNGSLYTTKSDIYSIGIVFWELVTRVINGEYSRPYSEYSHIKMDFQIMLNSKEGLRPTLPQNTPPGLEALYKQCVNQEQTLRPSCEEIIETLNRLRHEYMSSKTTWDSLIRKLPSLSPPPQPTTTTTTTTSSSTSTNNINNNINNNNNT</sequence>
<dbReference type="EC" id="2.7.11.1"/>
<dbReference type="EMBL" id="AAFI02000023">
    <property type="protein sequence ID" value="EAL68440.1"/>
    <property type="molecule type" value="Genomic_DNA"/>
</dbReference>
<dbReference type="RefSeq" id="XP_642427.1">
    <property type="nucleotide sequence ID" value="XM_637335.1"/>
</dbReference>
<dbReference type="SMR" id="Q54XX5"/>
<dbReference type="PaxDb" id="44689-DDB0229849"/>
<dbReference type="EnsemblProtists" id="EAL68440">
    <property type="protein sequence ID" value="EAL68440"/>
    <property type="gene ID" value="DDB_G0278535"/>
</dbReference>
<dbReference type="GeneID" id="8621632"/>
<dbReference type="KEGG" id="ddi:DDB_G0278535"/>
<dbReference type="dictyBase" id="DDB_G0278535"/>
<dbReference type="VEuPathDB" id="AmoebaDB:DDB_G0278535"/>
<dbReference type="eggNOG" id="KOG0192">
    <property type="taxonomic scope" value="Eukaryota"/>
</dbReference>
<dbReference type="HOGENOM" id="CLU_020450_0_0_1"/>
<dbReference type="InParanoid" id="Q54XX5"/>
<dbReference type="OMA" id="NHPCIIH"/>
<dbReference type="PhylomeDB" id="Q54XX5"/>
<dbReference type="PRO" id="PR:Q54XX5"/>
<dbReference type="Proteomes" id="UP000002195">
    <property type="component" value="Chromosome 3"/>
</dbReference>
<dbReference type="GO" id="GO:0005737">
    <property type="term" value="C:cytoplasm"/>
    <property type="evidence" value="ECO:0000318"/>
    <property type="project" value="GO_Central"/>
</dbReference>
<dbReference type="GO" id="GO:0005524">
    <property type="term" value="F:ATP binding"/>
    <property type="evidence" value="ECO:0007669"/>
    <property type="project" value="UniProtKB-KW"/>
</dbReference>
<dbReference type="GO" id="GO:0106310">
    <property type="term" value="F:protein serine kinase activity"/>
    <property type="evidence" value="ECO:0007669"/>
    <property type="project" value="RHEA"/>
</dbReference>
<dbReference type="GO" id="GO:0004674">
    <property type="term" value="F:protein serine/threonine kinase activity"/>
    <property type="evidence" value="ECO:0000318"/>
    <property type="project" value="GO_Central"/>
</dbReference>
<dbReference type="GO" id="GO:0007165">
    <property type="term" value="P:signal transduction"/>
    <property type="evidence" value="ECO:0000318"/>
    <property type="project" value="GO_Central"/>
</dbReference>
<dbReference type="CDD" id="cd09487">
    <property type="entry name" value="SAM_superfamily"/>
    <property type="match status" value="1"/>
</dbReference>
<dbReference type="CDD" id="cd13999">
    <property type="entry name" value="STKc_MAP3K-like"/>
    <property type="match status" value="1"/>
</dbReference>
<dbReference type="FunFam" id="3.30.200.20:FF:000034">
    <property type="entry name" value="Kinase suppressor of Ras 1"/>
    <property type="match status" value="1"/>
</dbReference>
<dbReference type="FunFam" id="1.10.150.50:FF:000129">
    <property type="entry name" value="Probable serine/threonine-protein kinase DDB_G0278535"/>
    <property type="match status" value="1"/>
</dbReference>
<dbReference type="FunFam" id="1.10.510.10:FF:001060">
    <property type="entry name" value="Probable serine/threonine-protein kinase DDB_G0278535"/>
    <property type="match status" value="1"/>
</dbReference>
<dbReference type="FunFam" id="1.25.40.20:FF:000433">
    <property type="entry name" value="Probable serine/threonine-protein kinase DDB_G0278535"/>
    <property type="match status" value="1"/>
</dbReference>
<dbReference type="Gene3D" id="1.25.40.20">
    <property type="entry name" value="Ankyrin repeat-containing domain"/>
    <property type="match status" value="1"/>
</dbReference>
<dbReference type="Gene3D" id="3.30.200.20">
    <property type="entry name" value="Phosphorylase Kinase, domain 1"/>
    <property type="match status" value="1"/>
</dbReference>
<dbReference type="Gene3D" id="1.10.150.50">
    <property type="entry name" value="Transcription Factor, Ets-1"/>
    <property type="match status" value="1"/>
</dbReference>
<dbReference type="Gene3D" id="1.10.510.10">
    <property type="entry name" value="Transferase(Phosphotransferase) domain 1"/>
    <property type="match status" value="1"/>
</dbReference>
<dbReference type="InterPro" id="IPR002110">
    <property type="entry name" value="Ankyrin_rpt"/>
</dbReference>
<dbReference type="InterPro" id="IPR036770">
    <property type="entry name" value="Ankyrin_rpt-contain_sf"/>
</dbReference>
<dbReference type="InterPro" id="IPR011009">
    <property type="entry name" value="Kinase-like_dom_sf"/>
</dbReference>
<dbReference type="InterPro" id="IPR000719">
    <property type="entry name" value="Prot_kinase_dom"/>
</dbReference>
<dbReference type="InterPro" id="IPR017441">
    <property type="entry name" value="Protein_kinase_ATP_BS"/>
</dbReference>
<dbReference type="InterPro" id="IPR001660">
    <property type="entry name" value="SAM"/>
</dbReference>
<dbReference type="InterPro" id="IPR013761">
    <property type="entry name" value="SAM/pointed_sf"/>
</dbReference>
<dbReference type="InterPro" id="IPR001245">
    <property type="entry name" value="Ser-Thr/Tyr_kinase_cat_dom"/>
</dbReference>
<dbReference type="InterPro" id="IPR008271">
    <property type="entry name" value="Ser/Thr_kinase_AS"/>
</dbReference>
<dbReference type="InterPro" id="IPR051681">
    <property type="entry name" value="Ser/Thr_Kinases-Pseudokinases"/>
</dbReference>
<dbReference type="PANTHER" id="PTHR44329:SF288">
    <property type="entry name" value="MITOGEN-ACTIVATED PROTEIN KINASE KINASE KINASE 20"/>
    <property type="match status" value="1"/>
</dbReference>
<dbReference type="PANTHER" id="PTHR44329">
    <property type="entry name" value="SERINE/THREONINE-PROTEIN KINASE TNNI3K-RELATED"/>
    <property type="match status" value="1"/>
</dbReference>
<dbReference type="Pfam" id="PF12796">
    <property type="entry name" value="Ank_2"/>
    <property type="match status" value="2"/>
</dbReference>
<dbReference type="Pfam" id="PF07714">
    <property type="entry name" value="PK_Tyr_Ser-Thr"/>
    <property type="match status" value="1"/>
</dbReference>
<dbReference type="Pfam" id="PF00536">
    <property type="entry name" value="SAM_1"/>
    <property type="match status" value="1"/>
</dbReference>
<dbReference type="PIRSF" id="PIRSF000615">
    <property type="entry name" value="TyrPK_CSF1-R"/>
    <property type="match status" value="1"/>
</dbReference>
<dbReference type="PRINTS" id="PR01415">
    <property type="entry name" value="ANKYRIN"/>
</dbReference>
<dbReference type="SMART" id="SM00248">
    <property type="entry name" value="ANK"/>
    <property type="match status" value="5"/>
</dbReference>
<dbReference type="SMART" id="SM00454">
    <property type="entry name" value="SAM"/>
    <property type="match status" value="1"/>
</dbReference>
<dbReference type="SUPFAM" id="SSF48403">
    <property type="entry name" value="Ankyrin repeat"/>
    <property type="match status" value="1"/>
</dbReference>
<dbReference type="SUPFAM" id="SSF56112">
    <property type="entry name" value="Protein kinase-like (PK-like)"/>
    <property type="match status" value="1"/>
</dbReference>
<dbReference type="SUPFAM" id="SSF47769">
    <property type="entry name" value="SAM/Pointed domain"/>
    <property type="match status" value="1"/>
</dbReference>
<dbReference type="PROSITE" id="PS50297">
    <property type="entry name" value="ANK_REP_REGION"/>
    <property type="match status" value="1"/>
</dbReference>
<dbReference type="PROSITE" id="PS50088">
    <property type="entry name" value="ANK_REPEAT"/>
    <property type="match status" value="3"/>
</dbReference>
<dbReference type="PROSITE" id="PS00107">
    <property type="entry name" value="PROTEIN_KINASE_ATP"/>
    <property type="match status" value="1"/>
</dbReference>
<dbReference type="PROSITE" id="PS50011">
    <property type="entry name" value="PROTEIN_KINASE_DOM"/>
    <property type="match status" value="1"/>
</dbReference>
<dbReference type="PROSITE" id="PS00108">
    <property type="entry name" value="PROTEIN_KINASE_ST"/>
    <property type="match status" value="1"/>
</dbReference>
<dbReference type="PROSITE" id="PS50105">
    <property type="entry name" value="SAM_DOMAIN"/>
    <property type="match status" value="1"/>
</dbReference>